<organism>
    <name type="scientific">Bacillus anthracis (strain CDC 684 / NRRL 3495)</name>
    <dbReference type="NCBI Taxonomy" id="568206"/>
    <lineage>
        <taxon>Bacteria</taxon>
        <taxon>Bacillati</taxon>
        <taxon>Bacillota</taxon>
        <taxon>Bacilli</taxon>
        <taxon>Bacillales</taxon>
        <taxon>Bacillaceae</taxon>
        <taxon>Bacillus</taxon>
        <taxon>Bacillus cereus group</taxon>
    </lineage>
</organism>
<protein>
    <recommendedName>
        <fullName evidence="1">Transcriptional repressor NrdR</fullName>
    </recommendedName>
</protein>
<dbReference type="EMBL" id="CP001215">
    <property type="protein sequence ID" value="ACP13355.1"/>
    <property type="molecule type" value="Genomic_DNA"/>
</dbReference>
<dbReference type="RefSeq" id="WP_001203687.1">
    <property type="nucleotide sequence ID" value="NC_012581.1"/>
</dbReference>
<dbReference type="SMR" id="C3L8V8"/>
<dbReference type="GeneID" id="93006530"/>
<dbReference type="KEGG" id="bah:BAMEG_4855"/>
<dbReference type="HOGENOM" id="CLU_108412_0_0_9"/>
<dbReference type="GO" id="GO:0005524">
    <property type="term" value="F:ATP binding"/>
    <property type="evidence" value="ECO:0007669"/>
    <property type="project" value="UniProtKB-KW"/>
</dbReference>
<dbReference type="GO" id="GO:0003677">
    <property type="term" value="F:DNA binding"/>
    <property type="evidence" value="ECO:0007669"/>
    <property type="project" value="UniProtKB-KW"/>
</dbReference>
<dbReference type="GO" id="GO:0008270">
    <property type="term" value="F:zinc ion binding"/>
    <property type="evidence" value="ECO:0007669"/>
    <property type="project" value="UniProtKB-UniRule"/>
</dbReference>
<dbReference type="GO" id="GO:0045892">
    <property type="term" value="P:negative regulation of DNA-templated transcription"/>
    <property type="evidence" value="ECO:0007669"/>
    <property type="project" value="UniProtKB-UniRule"/>
</dbReference>
<dbReference type="HAMAP" id="MF_00440">
    <property type="entry name" value="NrdR"/>
    <property type="match status" value="1"/>
</dbReference>
<dbReference type="InterPro" id="IPR005144">
    <property type="entry name" value="ATP-cone_dom"/>
</dbReference>
<dbReference type="InterPro" id="IPR055173">
    <property type="entry name" value="NrdR-like_N"/>
</dbReference>
<dbReference type="InterPro" id="IPR003796">
    <property type="entry name" value="RNR_NrdR-like"/>
</dbReference>
<dbReference type="NCBIfam" id="TIGR00244">
    <property type="entry name" value="transcriptional regulator NrdR"/>
    <property type="match status" value="1"/>
</dbReference>
<dbReference type="PANTHER" id="PTHR30455">
    <property type="entry name" value="TRANSCRIPTIONAL REPRESSOR NRDR"/>
    <property type="match status" value="1"/>
</dbReference>
<dbReference type="PANTHER" id="PTHR30455:SF2">
    <property type="entry name" value="TRANSCRIPTIONAL REPRESSOR NRDR"/>
    <property type="match status" value="1"/>
</dbReference>
<dbReference type="Pfam" id="PF03477">
    <property type="entry name" value="ATP-cone"/>
    <property type="match status" value="1"/>
</dbReference>
<dbReference type="Pfam" id="PF22811">
    <property type="entry name" value="Zn_ribbon_NrdR"/>
    <property type="match status" value="1"/>
</dbReference>
<dbReference type="PROSITE" id="PS51161">
    <property type="entry name" value="ATP_CONE"/>
    <property type="match status" value="1"/>
</dbReference>
<gene>
    <name evidence="1" type="primary">nrdR</name>
    <name type="ordered locus">BAMEG_4855</name>
</gene>
<sequence length="153" mass="18024">MRCPSCSHNGTRVLDSRPVDEGRSIRRRRECESCLSRFTTFERVEESPLIVVKKEGTREEFNKEKILRGLIKACEKRPVSLRQLEEVTQSVERELRNLGISEVKSDMIGEIVMEELRDIDDVAYVRFASVYRQFKDLNVFIEELKDILQKERE</sequence>
<feature type="chain" id="PRO_1000191779" description="Transcriptional repressor NrdR">
    <location>
        <begin position="1"/>
        <end position="153"/>
    </location>
</feature>
<feature type="domain" description="ATP-cone" evidence="1">
    <location>
        <begin position="49"/>
        <end position="139"/>
    </location>
</feature>
<feature type="zinc finger region" evidence="1">
    <location>
        <begin position="3"/>
        <end position="34"/>
    </location>
</feature>
<accession>C3L8V8</accession>
<comment type="function">
    <text evidence="1">Negatively regulates transcription of bacterial ribonucleotide reductase nrd genes and operons by binding to NrdR-boxes.</text>
</comment>
<comment type="cofactor">
    <cofactor evidence="1">
        <name>Zn(2+)</name>
        <dbReference type="ChEBI" id="CHEBI:29105"/>
    </cofactor>
    <text evidence="1">Binds 1 zinc ion.</text>
</comment>
<comment type="similarity">
    <text evidence="1">Belongs to the NrdR family.</text>
</comment>
<keyword id="KW-0067">ATP-binding</keyword>
<keyword id="KW-0238">DNA-binding</keyword>
<keyword id="KW-0479">Metal-binding</keyword>
<keyword id="KW-0547">Nucleotide-binding</keyword>
<keyword id="KW-0678">Repressor</keyword>
<keyword id="KW-0804">Transcription</keyword>
<keyword id="KW-0805">Transcription regulation</keyword>
<keyword id="KW-0862">Zinc</keyword>
<keyword id="KW-0863">Zinc-finger</keyword>
<name>NRDR_BACAC</name>
<reference key="1">
    <citation type="submission" date="2008-10" db="EMBL/GenBank/DDBJ databases">
        <title>Genome sequence of Bacillus anthracis str. CDC 684.</title>
        <authorList>
            <person name="Dodson R.J."/>
            <person name="Munk A.C."/>
            <person name="Brettin T."/>
            <person name="Bruce D."/>
            <person name="Detter C."/>
            <person name="Tapia R."/>
            <person name="Han C."/>
            <person name="Sutton G."/>
            <person name="Sims D."/>
        </authorList>
    </citation>
    <scope>NUCLEOTIDE SEQUENCE [LARGE SCALE GENOMIC DNA]</scope>
    <source>
        <strain>CDC 684 / NRRL 3495</strain>
    </source>
</reference>
<evidence type="ECO:0000255" key="1">
    <source>
        <dbReference type="HAMAP-Rule" id="MF_00440"/>
    </source>
</evidence>
<proteinExistence type="inferred from homology"/>